<feature type="chain" id="PRO_0000181333" description="Somatotropin">
    <location>
        <begin position="1"/>
        <end position="190"/>
    </location>
</feature>
<feature type="binding site" evidence="1">
    <location>
        <position position="19"/>
    </location>
    <ligand>
        <name>Zn(2+)</name>
        <dbReference type="ChEBI" id="CHEBI:29105"/>
    </ligand>
</feature>
<feature type="binding site" evidence="1">
    <location>
        <position position="172"/>
    </location>
    <ligand>
        <name>Zn(2+)</name>
        <dbReference type="ChEBI" id="CHEBI:29105"/>
    </ligand>
</feature>
<feature type="disulfide bond" evidence="1">
    <location>
        <begin position="52"/>
        <end position="163"/>
    </location>
</feature>
<feature type="disulfide bond" evidence="1">
    <location>
        <begin position="180"/>
        <end position="188"/>
    </location>
</feature>
<sequence>FPAMPLSNLFANAVLRAQHLYLLAAETYKEFERSYIPEEQRHSNKNSQSAFCYSETIPAPTGKDDAQQKSDMELLRFSLVLVQSWLNPVQFLSRVFTNSLVFGTSDRVFEKLRDLEEGIQALMRELEDGSHRGPQILKPTYEKFDINLRNEDALLKNYGLLSCFKKDLHKVETYLKLMKCRRFGESNCSI</sequence>
<proteinExistence type="evidence at protein level"/>
<keyword id="KW-0903">Direct protein sequencing</keyword>
<keyword id="KW-1015">Disulfide bond</keyword>
<keyword id="KW-0372">Hormone</keyword>
<keyword id="KW-0479">Metal-binding</keyword>
<keyword id="KW-0964">Secreted</keyword>
<keyword id="KW-0862">Zinc</keyword>
<dbReference type="SMR" id="P55755"/>
<dbReference type="GO" id="GO:0005615">
    <property type="term" value="C:extracellular space"/>
    <property type="evidence" value="ECO:0007669"/>
    <property type="project" value="InterPro"/>
</dbReference>
<dbReference type="GO" id="GO:0008083">
    <property type="term" value="F:growth factor activity"/>
    <property type="evidence" value="ECO:0007669"/>
    <property type="project" value="TreeGrafter"/>
</dbReference>
<dbReference type="GO" id="GO:0005131">
    <property type="term" value="F:growth hormone receptor binding"/>
    <property type="evidence" value="ECO:0007669"/>
    <property type="project" value="InterPro"/>
</dbReference>
<dbReference type="GO" id="GO:0005179">
    <property type="term" value="F:hormone activity"/>
    <property type="evidence" value="ECO:0007669"/>
    <property type="project" value="UniProtKB-KW"/>
</dbReference>
<dbReference type="GO" id="GO:0046872">
    <property type="term" value="F:metal ion binding"/>
    <property type="evidence" value="ECO:0007669"/>
    <property type="project" value="UniProtKB-KW"/>
</dbReference>
<dbReference type="GO" id="GO:0048513">
    <property type="term" value="P:animal organ development"/>
    <property type="evidence" value="ECO:0007669"/>
    <property type="project" value="TreeGrafter"/>
</dbReference>
<dbReference type="GO" id="GO:0060396">
    <property type="term" value="P:growth hormone receptor signaling pathway"/>
    <property type="evidence" value="ECO:0007669"/>
    <property type="project" value="TreeGrafter"/>
</dbReference>
<dbReference type="GO" id="GO:0045927">
    <property type="term" value="P:positive regulation of growth"/>
    <property type="evidence" value="ECO:0007669"/>
    <property type="project" value="TreeGrafter"/>
</dbReference>
<dbReference type="GO" id="GO:0046427">
    <property type="term" value="P:positive regulation of receptor signaling pathway via JAK-STAT"/>
    <property type="evidence" value="ECO:0007669"/>
    <property type="project" value="TreeGrafter"/>
</dbReference>
<dbReference type="GO" id="GO:0031667">
    <property type="term" value="P:response to nutrient levels"/>
    <property type="evidence" value="ECO:0007669"/>
    <property type="project" value="TreeGrafter"/>
</dbReference>
<dbReference type="CDD" id="cd10285">
    <property type="entry name" value="somatotropin_like"/>
    <property type="match status" value="1"/>
</dbReference>
<dbReference type="FunFam" id="1.20.1250.10:FF:000002">
    <property type="entry name" value="Growth hormone"/>
    <property type="match status" value="1"/>
</dbReference>
<dbReference type="Gene3D" id="1.20.1250.10">
    <property type="match status" value="1"/>
</dbReference>
<dbReference type="InterPro" id="IPR009079">
    <property type="entry name" value="4_helix_cytokine-like_core"/>
</dbReference>
<dbReference type="InterPro" id="IPR034975">
    <property type="entry name" value="Somatotropin"/>
</dbReference>
<dbReference type="InterPro" id="IPR001400">
    <property type="entry name" value="Somatotropin/Prolactin"/>
</dbReference>
<dbReference type="InterPro" id="IPR018116">
    <property type="entry name" value="Somatotropin_CS"/>
</dbReference>
<dbReference type="PANTHER" id="PTHR11417:SF2">
    <property type="entry name" value="SOMATOTROPIN"/>
    <property type="match status" value="1"/>
</dbReference>
<dbReference type="PANTHER" id="PTHR11417">
    <property type="entry name" value="SOMATOTROPIN,PROLACTIN"/>
    <property type="match status" value="1"/>
</dbReference>
<dbReference type="Pfam" id="PF00103">
    <property type="entry name" value="Hormone_1"/>
    <property type="match status" value="1"/>
</dbReference>
<dbReference type="PRINTS" id="PR00836">
    <property type="entry name" value="SOMATOTROPIN"/>
</dbReference>
<dbReference type="SUPFAM" id="SSF47266">
    <property type="entry name" value="4-helical cytokines"/>
    <property type="match status" value="1"/>
</dbReference>
<dbReference type="PROSITE" id="PS00266">
    <property type="entry name" value="SOMATOTROPIN_1"/>
    <property type="match status" value="1"/>
</dbReference>
<dbReference type="PROSITE" id="PS00338">
    <property type="entry name" value="SOMATOTROPIN_2"/>
    <property type="match status" value="1"/>
</dbReference>
<gene>
    <name type="primary">GH</name>
</gene>
<name>SOMA_CRONO</name>
<comment type="function">
    <text>Growth hormone plays an important role in growth control and involved in the regulation of several anabolic processes.</text>
</comment>
<comment type="subcellular location">
    <subcellularLocation>
        <location>Secreted</location>
    </subcellularLocation>
</comment>
<comment type="similarity">
    <text evidence="2">Belongs to the somatotropin/prolactin family.</text>
</comment>
<evidence type="ECO:0000250" key="1"/>
<evidence type="ECO:0000305" key="2"/>
<protein>
    <recommendedName>
        <fullName>Somatotropin</fullName>
    </recommendedName>
    <alternativeName>
        <fullName>Growth hormone</fullName>
    </alternativeName>
</protein>
<accession>P55755</accession>
<reference key="1">
    <citation type="journal article" date="1995" name="Gen. Comp. Endocrinol.">
        <title>Complete amino acid sequence of crocodile growth hormone.</title>
        <authorList>
            <person name="Noso T."/>
            <person name="Lance V.A."/>
            <person name="Kawauchi H."/>
        </authorList>
    </citation>
    <scope>PROTEIN SEQUENCE</scope>
    <source>
        <tissue>Pituitary</tissue>
    </source>
</reference>
<organism>
    <name type="scientific">Crocodylus novaeguineae</name>
    <name type="common">Crocodile</name>
    <dbReference type="NCBI Taxonomy" id="8503"/>
    <lineage>
        <taxon>Eukaryota</taxon>
        <taxon>Metazoa</taxon>
        <taxon>Chordata</taxon>
        <taxon>Craniata</taxon>
        <taxon>Vertebrata</taxon>
        <taxon>Euteleostomi</taxon>
        <taxon>Archelosauria</taxon>
        <taxon>Archosauria</taxon>
        <taxon>Crocodylia</taxon>
        <taxon>Longirostres</taxon>
        <taxon>Crocodylidae</taxon>
        <taxon>Crocodylus</taxon>
    </lineage>
</organism>